<reference key="1">
    <citation type="journal article" date="2009" name="Science">
        <title>The dynamics and time scale of ongoing genomic erosion in symbiotic bacteria.</title>
        <authorList>
            <person name="Moran N.A."/>
            <person name="McLaughlin H.J."/>
            <person name="Sorek R."/>
        </authorList>
    </citation>
    <scope>NUCLEOTIDE SEQUENCE [LARGE SCALE GENOMIC DNA]</scope>
    <source>
        <strain>5A</strain>
    </source>
</reference>
<name>RL33_BUCA5</name>
<proteinExistence type="inferred from homology"/>
<accession>B8D8N9</accession>
<keyword id="KW-0687">Ribonucleoprotein</keyword>
<keyword id="KW-0689">Ribosomal protein</keyword>
<feature type="chain" id="PRO_1000194048" description="Large ribosomal subunit protein bL33">
    <location>
        <begin position="1"/>
        <end position="55"/>
    </location>
</feature>
<protein>
    <recommendedName>
        <fullName evidence="1">Large ribosomal subunit protein bL33</fullName>
    </recommendedName>
    <alternativeName>
        <fullName evidence="2">50S ribosomal protein L33</fullName>
    </alternativeName>
</protein>
<comment type="similarity">
    <text evidence="1">Belongs to the bacterial ribosomal protein bL33 family.</text>
</comment>
<organism>
    <name type="scientific">Buchnera aphidicola subsp. Acyrthosiphon pisum (strain 5A)</name>
    <dbReference type="NCBI Taxonomy" id="563178"/>
    <lineage>
        <taxon>Bacteria</taxon>
        <taxon>Pseudomonadati</taxon>
        <taxon>Pseudomonadota</taxon>
        <taxon>Gammaproteobacteria</taxon>
        <taxon>Enterobacterales</taxon>
        <taxon>Erwiniaceae</taxon>
        <taxon>Buchnera</taxon>
    </lineage>
</organism>
<gene>
    <name evidence="1" type="primary">rpmG</name>
    <name type="ordered locus">BUAP5A_084</name>
</gene>
<evidence type="ECO:0000255" key="1">
    <source>
        <dbReference type="HAMAP-Rule" id="MF_00294"/>
    </source>
</evidence>
<evidence type="ECO:0000305" key="2"/>
<dbReference type="EMBL" id="CP001161">
    <property type="protein sequence ID" value="ACL30461.1"/>
    <property type="molecule type" value="Genomic_DNA"/>
</dbReference>
<dbReference type="RefSeq" id="WP_009874038.1">
    <property type="nucleotide sequence ID" value="NC_011833.1"/>
</dbReference>
<dbReference type="SMR" id="B8D8N9"/>
<dbReference type="KEGG" id="bap:BUAP5A_084"/>
<dbReference type="HOGENOM" id="CLU_190949_1_1_6"/>
<dbReference type="OrthoDB" id="21586at2"/>
<dbReference type="Proteomes" id="UP000006904">
    <property type="component" value="Chromosome"/>
</dbReference>
<dbReference type="GO" id="GO:0022625">
    <property type="term" value="C:cytosolic large ribosomal subunit"/>
    <property type="evidence" value="ECO:0007669"/>
    <property type="project" value="TreeGrafter"/>
</dbReference>
<dbReference type="GO" id="GO:0003735">
    <property type="term" value="F:structural constituent of ribosome"/>
    <property type="evidence" value="ECO:0007669"/>
    <property type="project" value="InterPro"/>
</dbReference>
<dbReference type="GO" id="GO:0006412">
    <property type="term" value="P:translation"/>
    <property type="evidence" value="ECO:0007669"/>
    <property type="project" value="UniProtKB-UniRule"/>
</dbReference>
<dbReference type="FunFam" id="2.20.28.120:FF:000001">
    <property type="entry name" value="50S ribosomal protein L33"/>
    <property type="match status" value="1"/>
</dbReference>
<dbReference type="Gene3D" id="2.20.28.120">
    <property type="entry name" value="Ribosomal protein L33"/>
    <property type="match status" value="1"/>
</dbReference>
<dbReference type="HAMAP" id="MF_00294">
    <property type="entry name" value="Ribosomal_bL33"/>
    <property type="match status" value="1"/>
</dbReference>
<dbReference type="InterPro" id="IPR001705">
    <property type="entry name" value="Ribosomal_bL33"/>
</dbReference>
<dbReference type="InterPro" id="IPR038584">
    <property type="entry name" value="Ribosomal_bL33_sf"/>
</dbReference>
<dbReference type="InterPro" id="IPR011332">
    <property type="entry name" value="Ribosomal_zn-bd"/>
</dbReference>
<dbReference type="NCBIfam" id="NF001860">
    <property type="entry name" value="PRK00595.1"/>
    <property type="match status" value="1"/>
</dbReference>
<dbReference type="NCBIfam" id="TIGR01023">
    <property type="entry name" value="rpmG_bact"/>
    <property type="match status" value="1"/>
</dbReference>
<dbReference type="PANTHER" id="PTHR15238">
    <property type="entry name" value="54S RIBOSOMAL PROTEIN L39, MITOCHONDRIAL"/>
    <property type="match status" value="1"/>
</dbReference>
<dbReference type="PANTHER" id="PTHR15238:SF1">
    <property type="entry name" value="LARGE RIBOSOMAL SUBUNIT PROTEIN BL33M"/>
    <property type="match status" value="1"/>
</dbReference>
<dbReference type="Pfam" id="PF00471">
    <property type="entry name" value="Ribosomal_L33"/>
    <property type="match status" value="1"/>
</dbReference>
<dbReference type="SUPFAM" id="SSF57829">
    <property type="entry name" value="Zn-binding ribosomal proteins"/>
    <property type="match status" value="1"/>
</dbReference>
<sequence>MAKKAREKIKMISSAGTGHYYTTTKNKRNTPDKLKLKKYDPVIRKHILYNEGKIK</sequence>